<organism>
    <name type="scientific">Dictyostelium discoideum</name>
    <name type="common">Social amoeba</name>
    <dbReference type="NCBI Taxonomy" id="44689"/>
    <lineage>
        <taxon>Eukaryota</taxon>
        <taxon>Amoebozoa</taxon>
        <taxon>Evosea</taxon>
        <taxon>Eumycetozoa</taxon>
        <taxon>Dictyostelia</taxon>
        <taxon>Dictyosteliales</taxon>
        <taxon>Dictyosteliaceae</taxon>
        <taxon>Dictyostelium</taxon>
    </lineage>
</organism>
<reference key="1">
    <citation type="journal article" date="2005" name="Nature">
        <title>The genome of the social amoeba Dictyostelium discoideum.</title>
        <authorList>
            <person name="Eichinger L."/>
            <person name="Pachebat J.A."/>
            <person name="Gloeckner G."/>
            <person name="Rajandream M.A."/>
            <person name="Sucgang R."/>
            <person name="Berriman M."/>
            <person name="Song J."/>
            <person name="Olsen R."/>
            <person name="Szafranski K."/>
            <person name="Xu Q."/>
            <person name="Tunggal B."/>
            <person name="Kummerfeld S."/>
            <person name="Madera M."/>
            <person name="Konfortov B.A."/>
            <person name="Rivero F."/>
            <person name="Bankier A.T."/>
            <person name="Lehmann R."/>
            <person name="Hamlin N."/>
            <person name="Davies R."/>
            <person name="Gaudet P."/>
            <person name="Fey P."/>
            <person name="Pilcher K."/>
            <person name="Chen G."/>
            <person name="Saunders D."/>
            <person name="Sodergren E.J."/>
            <person name="Davis P."/>
            <person name="Kerhornou A."/>
            <person name="Nie X."/>
            <person name="Hall N."/>
            <person name="Anjard C."/>
            <person name="Hemphill L."/>
            <person name="Bason N."/>
            <person name="Farbrother P."/>
            <person name="Desany B."/>
            <person name="Just E."/>
            <person name="Morio T."/>
            <person name="Rost R."/>
            <person name="Churcher C.M."/>
            <person name="Cooper J."/>
            <person name="Haydock S."/>
            <person name="van Driessche N."/>
            <person name="Cronin A."/>
            <person name="Goodhead I."/>
            <person name="Muzny D.M."/>
            <person name="Mourier T."/>
            <person name="Pain A."/>
            <person name="Lu M."/>
            <person name="Harper D."/>
            <person name="Lindsay R."/>
            <person name="Hauser H."/>
            <person name="James K.D."/>
            <person name="Quiles M."/>
            <person name="Madan Babu M."/>
            <person name="Saito T."/>
            <person name="Buchrieser C."/>
            <person name="Wardroper A."/>
            <person name="Felder M."/>
            <person name="Thangavelu M."/>
            <person name="Johnson D."/>
            <person name="Knights A."/>
            <person name="Loulseged H."/>
            <person name="Mungall K.L."/>
            <person name="Oliver K."/>
            <person name="Price C."/>
            <person name="Quail M.A."/>
            <person name="Urushihara H."/>
            <person name="Hernandez J."/>
            <person name="Rabbinowitsch E."/>
            <person name="Steffen D."/>
            <person name="Sanders M."/>
            <person name="Ma J."/>
            <person name="Kohara Y."/>
            <person name="Sharp S."/>
            <person name="Simmonds M.N."/>
            <person name="Spiegler S."/>
            <person name="Tivey A."/>
            <person name="Sugano S."/>
            <person name="White B."/>
            <person name="Walker D."/>
            <person name="Woodward J.R."/>
            <person name="Winckler T."/>
            <person name="Tanaka Y."/>
            <person name="Shaulsky G."/>
            <person name="Schleicher M."/>
            <person name="Weinstock G.M."/>
            <person name="Rosenthal A."/>
            <person name="Cox E.C."/>
            <person name="Chisholm R.L."/>
            <person name="Gibbs R.A."/>
            <person name="Loomis W.F."/>
            <person name="Platzer M."/>
            <person name="Kay R.R."/>
            <person name="Williams J.G."/>
            <person name="Dear P.H."/>
            <person name="Noegel A.A."/>
            <person name="Barrell B.G."/>
            <person name="Kuspa A."/>
        </authorList>
    </citation>
    <scope>NUCLEOTIDE SEQUENCE [LARGE SCALE GENOMIC DNA]</scope>
    <source>
        <strain>AX4</strain>
    </source>
</reference>
<sequence length="184" mass="21226">MGLLTVLKKLKQKEKELRILMLGLDNAGKTTILKKFNGEDISTISPTLGFNIQTLMYKEYKLNIWDIGGQKTLRSYWRNYYEENDAVIWVIDSSDIRRIDDCKFELKKLLEEEKFAGASFLVFANKQDLDGAMTSEEISKYLDLEQLNTHHWEIMSCSAVTGLGLEEGIDWVVKDIVSRCFVLD</sequence>
<keyword id="KW-0342">GTP-binding</keyword>
<keyword id="KW-0449">Lipoprotein</keyword>
<keyword id="KW-0519">Myristate</keyword>
<keyword id="KW-0547">Nucleotide-binding</keyword>
<keyword id="KW-0653">Protein transport</keyword>
<keyword id="KW-1185">Reference proteome</keyword>
<keyword id="KW-0813">Transport</keyword>
<accession>Q54UF1</accession>
<protein>
    <recommendedName>
        <fullName>ADP-ribosylation factor-like protein 2</fullName>
    </recommendedName>
</protein>
<feature type="initiator methionine" description="Removed" evidence="2">
    <location>
        <position position="1"/>
    </location>
</feature>
<feature type="chain" id="PRO_0000365730" description="ADP-ribosylation factor-like protein 2">
    <location>
        <begin position="2"/>
        <end position="184"/>
    </location>
</feature>
<feature type="binding site" evidence="1">
    <location>
        <begin position="23"/>
        <end position="30"/>
    </location>
    <ligand>
        <name>GTP</name>
        <dbReference type="ChEBI" id="CHEBI:37565"/>
    </ligand>
</feature>
<feature type="binding site" evidence="1">
    <location>
        <begin position="66"/>
        <end position="70"/>
    </location>
    <ligand>
        <name>GTP</name>
        <dbReference type="ChEBI" id="CHEBI:37565"/>
    </ligand>
</feature>
<feature type="binding site" evidence="1">
    <location>
        <begin position="125"/>
        <end position="128"/>
    </location>
    <ligand>
        <name>GTP</name>
        <dbReference type="ChEBI" id="CHEBI:37565"/>
    </ligand>
</feature>
<feature type="lipid moiety-binding region" description="N-myristoyl glycine" evidence="2">
    <location>
        <position position="2"/>
    </location>
</feature>
<proteinExistence type="inferred from homology"/>
<gene>
    <name type="primary">arl2</name>
    <name type="synonym">arlB</name>
    <name type="ORF">DDB_G0281307</name>
</gene>
<comment type="function">
    <text evidence="1">May be involved in trafficking events within the endosomal system.</text>
</comment>
<comment type="similarity">
    <text evidence="3">Belongs to the small GTPase superfamily. Arf family.</text>
</comment>
<dbReference type="EMBL" id="AAFI02000040">
    <property type="protein sequence ID" value="EAL66950.1"/>
    <property type="molecule type" value="Genomic_DNA"/>
</dbReference>
<dbReference type="RefSeq" id="XP_640825.1">
    <property type="nucleotide sequence ID" value="XM_635733.1"/>
</dbReference>
<dbReference type="SMR" id="Q54UF1"/>
<dbReference type="FunCoup" id="Q54UF1">
    <property type="interactions" value="275"/>
</dbReference>
<dbReference type="STRING" id="44689.Q54UF1"/>
<dbReference type="PaxDb" id="44689-DDB0229375"/>
<dbReference type="EnsemblProtists" id="EAL66950">
    <property type="protein sequence ID" value="EAL66950"/>
    <property type="gene ID" value="DDB_G0281307"/>
</dbReference>
<dbReference type="GeneID" id="8622880"/>
<dbReference type="KEGG" id="ddi:DDB_G0281307"/>
<dbReference type="dictyBase" id="DDB_G0281307">
    <property type="gene designation" value="arl2"/>
</dbReference>
<dbReference type="VEuPathDB" id="AmoebaDB:DDB_G0281307"/>
<dbReference type="eggNOG" id="KOG0073">
    <property type="taxonomic scope" value="Eukaryota"/>
</dbReference>
<dbReference type="HOGENOM" id="CLU_040729_12_3_1"/>
<dbReference type="InParanoid" id="Q54UF1"/>
<dbReference type="OMA" id="KTHHWQI"/>
<dbReference type="PhylomeDB" id="Q54UF1"/>
<dbReference type="PRO" id="PR:Q54UF1"/>
<dbReference type="Proteomes" id="UP000002195">
    <property type="component" value="Chromosome 3"/>
</dbReference>
<dbReference type="GO" id="GO:0005737">
    <property type="term" value="C:cytoplasm"/>
    <property type="evidence" value="ECO:0000318"/>
    <property type="project" value="GO_Central"/>
</dbReference>
<dbReference type="GO" id="GO:0015630">
    <property type="term" value="C:microtubule cytoskeleton"/>
    <property type="evidence" value="ECO:0000318"/>
    <property type="project" value="GO_Central"/>
</dbReference>
<dbReference type="GO" id="GO:0005525">
    <property type="term" value="F:GTP binding"/>
    <property type="evidence" value="ECO:0000318"/>
    <property type="project" value="GO_Central"/>
</dbReference>
<dbReference type="GO" id="GO:0003924">
    <property type="term" value="F:GTPase activity"/>
    <property type="evidence" value="ECO:0007669"/>
    <property type="project" value="InterPro"/>
</dbReference>
<dbReference type="GO" id="GO:0006457">
    <property type="term" value="P:protein folding"/>
    <property type="evidence" value="ECO:0000318"/>
    <property type="project" value="GO_Central"/>
</dbReference>
<dbReference type="GO" id="GO:0015031">
    <property type="term" value="P:protein transport"/>
    <property type="evidence" value="ECO:0007669"/>
    <property type="project" value="UniProtKB-KW"/>
</dbReference>
<dbReference type="FunFam" id="3.40.50.300:FF:000393">
    <property type="entry name" value="ADP-ribosylation factor-like 2, arl2"/>
    <property type="match status" value="1"/>
</dbReference>
<dbReference type="Gene3D" id="3.40.50.300">
    <property type="entry name" value="P-loop containing nucleotide triphosphate hydrolases"/>
    <property type="match status" value="1"/>
</dbReference>
<dbReference type="InterPro" id="IPR044612">
    <property type="entry name" value="ARL2/3"/>
</dbReference>
<dbReference type="InterPro" id="IPR027417">
    <property type="entry name" value="P-loop_NTPase"/>
</dbReference>
<dbReference type="InterPro" id="IPR005225">
    <property type="entry name" value="Small_GTP-bd"/>
</dbReference>
<dbReference type="InterPro" id="IPR006689">
    <property type="entry name" value="Small_GTPase_ARF/SAR"/>
</dbReference>
<dbReference type="NCBIfam" id="TIGR00231">
    <property type="entry name" value="small_GTP"/>
    <property type="match status" value="1"/>
</dbReference>
<dbReference type="PANTHER" id="PTHR45697">
    <property type="entry name" value="ADP-RIBOSYLATION FACTOR-LIKE PROTEIN 2-RELATED"/>
    <property type="match status" value="1"/>
</dbReference>
<dbReference type="Pfam" id="PF00025">
    <property type="entry name" value="Arf"/>
    <property type="match status" value="1"/>
</dbReference>
<dbReference type="PRINTS" id="PR00328">
    <property type="entry name" value="SAR1GTPBP"/>
</dbReference>
<dbReference type="SMART" id="SM00177">
    <property type="entry name" value="ARF"/>
    <property type="match status" value="1"/>
</dbReference>
<dbReference type="SMART" id="SM00175">
    <property type="entry name" value="RAB"/>
    <property type="match status" value="1"/>
</dbReference>
<dbReference type="SMART" id="SM00178">
    <property type="entry name" value="SAR"/>
    <property type="match status" value="1"/>
</dbReference>
<dbReference type="SUPFAM" id="SSF52540">
    <property type="entry name" value="P-loop containing nucleoside triphosphate hydrolases"/>
    <property type="match status" value="1"/>
</dbReference>
<dbReference type="PROSITE" id="PS51417">
    <property type="entry name" value="ARF"/>
    <property type="match status" value="1"/>
</dbReference>
<evidence type="ECO:0000250" key="1"/>
<evidence type="ECO:0000255" key="2"/>
<evidence type="ECO:0000305" key="3"/>
<name>ARL2_DICDI</name>